<reference key="1">
    <citation type="journal article" date="2009" name="Science">
        <title>The dynamics and time scale of ongoing genomic erosion in symbiotic bacteria.</title>
        <authorList>
            <person name="Moran N.A."/>
            <person name="McLaughlin H.J."/>
            <person name="Sorek R."/>
        </authorList>
    </citation>
    <scope>NUCLEOTIDE SEQUENCE [LARGE SCALE GENOMIC DNA]</scope>
    <source>
        <strain>Tuc7</strain>
    </source>
</reference>
<sequence>MKNYHNNFHKLITILQEYWLQQGCTIFQPLDLPIGAGTFHNITFLGTIGPEPINAAYIQSCRRPSDGRYGENPNRLQHYYQFQVIIKPPPNNIQNIYLNSLYLLNIDEKIHDIRFVEDNWENPTLGAWGIGWEVWLNGMEITQFTYFQQVGGLECKPVSVEITYGLERIAMHMQNKSNVYDLIWNEYNHKKITYGDIFQQNEREQSQYNFQYSDVNFLFDCFKKYELEAKKLINLKEPLLLVSYEKILQANHIFNLLDARKSLSSNERQSYILRIRKLTSQVAIKYLNLRKNLGFPLCHKKREIHDKENIIN</sequence>
<feature type="chain" id="PRO_1000125540" description="Glycine--tRNA ligase alpha subunit">
    <location>
        <begin position="1"/>
        <end position="312"/>
    </location>
</feature>
<organism>
    <name type="scientific">Buchnera aphidicola subsp. Acyrthosiphon pisum (strain Tuc7)</name>
    <dbReference type="NCBI Taxonomy" id="561501"/>
    <lineage>
        <taxon>Bacteria</taxon>
        <taxon>Pseudomonadati</taxon>
        <taxon>Pseudomonadota</taxon>
        <taxon>Gammaproteobacteria</taxon>
        <taxon>Enterobacterales</taxon>
        <taxon>Erwiniaceae</taxon>
        <taxon>Buchnera</taxon>
    </lineage>
</organism>
<keyword id="KW-0030">Aminoacyl-tRNA synthetase</keyword>
<keyword id="KW-0067">ATP-binding</keyword>
<keyword id="KW-0963">Cytoplasm</keyword>
<keyword id="KW-0436">Ligase</keyword>
<keyword id="KW-0547">Nucleotide-binding</keyword>
<keyword id="KW-0648">Protein biosynthesis</keyword>
<gene>
    <name evidence="1" type="primary">glyQ</name>
    <name type="ordered locus">BUAPTUC7_135</name>
</gene>
<proteinExistence type="inferred from homology"/>
<protein>
    <recommendedName>
        <fullName evidence="1">Glycine--tRNA ligase alpha subunit</fullName>
        <ecNumber evidence="1">6.1.1.14</ecNumber>
    </recommendedName>
    <alternativeName>
        <fullName evidence="1">Glycyl-tRNA synthetase alpha subunit</fullName>
        <shortName evidence="1">GlyRS</shortName>
    </alternativeName>
</protein>
<dbReference type="EC" id="6.1.1.14" evidence="1"/>
<dbReference type="EMBL" id="CP001158">
    <property type="protein sequence ID" value="ACL29956.1"/>
    <property type="molecule type" value="Genomic_DNA"/>
</dbReference>
<dbReference type="RefSeq" id="WP_009874092.1">
    <property type="nucleotide sequence ID" value="NC_011834.1"/>
</dbReference>
<dbReference type="SMR" id="B8D741"/>
<dbReference type="KEGG" id="bau:BUAPTUC7_135"/>
<dbReference type="HOGENOM" id="CLU_057066_1_0_6"/>
<dbReference type="GO" id="GO:0005829">
    <property type="term" value="C:cytosol"/>
    <property type="evidence" value="ECO:0007669"/>
    <property type="project" value="TreeGrafter"/>
</dbReference>
<dbReference type="GO" id="GO:0005524">
    <property type="term" value="F:ATP binding"/>
    <property type="evidence" value="ECO:0007669"/>
    <property type="project" value="UniProtKB-UniRule"/>
</dbReference>
<dbReference type="GO" id="GO:0004820">
    <property type="term" value="F:glycine-tRNA ligase activity"/>
    <property type="evidence" value="ECO:0007669"/>
    <property type="project" value="UniProtKB-UniRule"/>
</dbReference>
<dbReference type="GO" id="GO:0006426">
    <property type="term" value="P:glycyl-tRNA aminoacylation"/>
    <property type="evidence" value="ECO:0007669"/>
    <property type="project" value="UniProtKB-UniRule"/>
</dbReference>
<dbReference type="FunFam" id="3.30.930.10:FF:000006">
    <property type="entry name" value="Glycine--tRNA ligase alpha subunit"/>
    <property type="match status" value="1"/>
</dbReference>
<dbReference type="Gene3D" id="3.30.930.10">
    <property type="entry name" value="Bira Bifunctional Protein, Domain 2"/>
    <property type="match status" value="1"/>
</dbReference>
<dbReference type="Gene3D" id="1.20.58.180">
    <property type="entry name" value="Class II aaRS and biotin synthetases, domain 2"/>
    <property type="match status" value="1"/>
</dbReference>
<dbReference type="HAMAP" id="MF_00254">
    <property type="entry name" value="Gly_tRNA_synth_alpha"/>
    <property type="match status" value="1"/>
</dbReference>
<dbReference type="InterPro" id="IPR045864">
    <property type="entry name" value="aa-tRNA-synth_II/BPL/LPL"/>
</dbReference>
<dbReference type="InterPro" id="IPR006194">
    <property type="entry name" value="Gly-tRNA-synth_heterodimer"/>
</dbReference>
<dbReference type="InterPro" id="IPR002310">
    <property type="entry name" value="Gly-tRNA_ligase_asu"/>
</dbReference>
<dbReference type="NCBIfam" id="TIGR00388">
    <property type="entry name" value="glyQ"/>
    <property type="match status" value="1"/>
</dbReference>
<dbReference type="NCBIfam" id="NF006827">
    <property type="entry name" value="PRK09348.1"/>
    <property type="match status" value="1"/>
</dbReference>
<dbReference type="PANTHER" id="PTHR30075:SF2">
    <property type="entry name" value="GLYCINE--TRNA LIGASE, CHLOROPLASTIC_MITOCHONDRIAL 2"/>
    <property type="match status" value="1"/>
</dbReference>
<dbReference type="PANTHER" id="PTHR30075">
    <property type="entry name" value="GLYCYL-TRNA SYNTHETASE"/>
    <property type="match status" value="1"/>
</dbReference>
<dbReference type="Pfam" id="PF02091">
    <property type="entry name" value="tRNA-synt_2e"/>
    <property type="match status" value="1"/>
</dbReference>
<dbReference type="PRINTS" id="PR01044">
    <property type="entry name" value="TRNASYNTHGA"/>
</dbReference>
<dbReference type="SUPFAM" id="SSF55681">
    <property type="entry name" value="Class II aaRS and biotin synthetases"/>
    <property type="match status" value="1"/>
</dbReference>
<dbReference type="PROSITE" id="PS50861">
    <property type="entry name" value="AA_TRNA_LIGASE_II_GLYAB"/>
    <property type="match status" value="1"/>
</dbReference>
<comment type="catalytic activity">
    <reaction evidence="1">
        <text>tRNA(Gly) + glycine + ATP = glycyl-tRNA(Gly) + AMP + diphosphate</text>
        <dbReference type="Rhea" id="RHEA:16013"/>
        <dbReference type="Rhea" id="RHEA-COMP:9664"/>
        <dbReference type="Rhea" id="RHEA-COMP:9683"/>
        <dbReference type="ChEBI" id="CHEBI:30616"/>
        <dbReference type="ChEBI" id="CHEBI:33019"/>
        <dbReference type="ChEBI" id="CHEBI:57305"/>
        <dbReference type="ChEBI" id="CHEBI:78442"/>
        <dbReference type="ChEBI" id="CHEBI:78522"/>
        <dbReference type="ChEBI" id="CHEBI:456215"/>
        <dbReference type="EC" id="6.1.1.14"/>
    </reaction>
</comment>
<comment type="subunit">
    <text evidence="1">Tetramer of two alpha and two beta subunits.</text>
</comment>
<comment type="subcellular location">
    <subcellularLocation>
        <location evidence="1">Cytoplasm</location>
    </subcellularLocation>
</comment>
<comment type="similarity">
    <text evidence="1">Belongs to the class-II aminoacyl-tRNA synthetase family.</text>
</comment>
<accession>B8D741</accession>
<evidence type="ECO:0000255" key="1">
    <source>
        <dbReference type="HAMAP-Rule" id="MF_00254"/>
    </source>
</evidence>
<name>SYGA_BUCAT</name>